<sequence length="270" mass="30082">MEKSVIIYVISDAIGETAQHIIRAVTAQFSLNKPADIRRHAFIRDEKALLETLEEAKAADGIVVQTLVQSPLAEYATDFCAQNNIPNIDLLHTLTAAVEAKTGLKSKQDPGNMRRLDSNYFDRIAAIEFAVKYDDCKDPRGLIDADIVLVGVSRTSKTPLSSFLANQNWKVANVPLVPEIPIPDELFQIPNERIIGLTTTPEKLAQIRKVRLKSIGLDESSSYSSEKRILEELEYGYDTFKKLGCQVIHVEDKAIEETAALITEIITSYH</sequence>
<keyword id="KW-0418">Kinase</keyword>
<keyword id="KW-0547">Nucleotide-binding</keyword>
<keyword id="KW-0723">Serine/threonine-protein kinase</keyword>
<keyword id="KW-0808">Transferase</keyword>
<feature type="chain" id="PRO_0000316695" description="Putative pyruvate, phosphate dikinase regulatory protein 2">
    <location>
        <begin position="1"/>
        <end position="270"/>
    </location>
</feature>
<feature type="binding site" evidence="1">
    <location>
        <begin position="151"/>
        <end position="158"/>
    </location>
    <ligand>
        <name>ADP</name>
        <dbReference type="ChEBI" id="CHEBI:456216"/>
    </ligand>
</feature>
<accession>A0AJX1</accession>
<dbReference type="EC" id="2.7.11.32" evidence="1"/>
<dbReference type="EC" id="2.7.4.27" evidence="1"/>
<dbReference type="EMBL" id="AM263198">
    <property type="protein sequence ID" value="CAK21303.1"/>
    <property type="molecule type" value="Genomic_DNA"/>
</dbReference>
<dbReference type="RefSeq" id="WP_011702652.1">
    <property type="nucleotide sequence ID" value="NC_008555.1"/>
</dbReference>
<dbReference type="SMR" id="A0AJX1"/>
<dbReference type="STRING" id="386043.lwe1885"/>
<dbReference type="GeneID" id="61189786"/>
<dbReference type="KEGG" id="lwe:lwe1885"/>
<dbReference type="eggNOG" id="COG1806">
    <property type="taxonomic scope" value="Bacteria"/>
</dbReference>
<dbReference type="HOGENOM" id="CLU_046206_2_1_9"/>
<dbReference type="OrthoDB" id="9782201at2"/>
<dbReference type="Proteomes" id="UP000000779">
    <property type="component" value="Chromosome"/>
</dbReference>
<dbReference type="GO" id="GO:0043531">
    <property type="term" value="F:ADP binding"/>
    <property type="evidence" value="ECO:0007669"/>
    <property type="project" value="UniProtKB-UniRule"/>
</dbReference>
<dbReference type="GO" id="GO:0005524">
    <property type="term" value="F:ATP binding"/>
    <property type="evidence" value="ECO:0007669"/>
    <property type="project" value="InterPro"/>
</dbReference>
<dbReference type="GO" id="GO:0016776">
    <property type="term" value="F:phosphotransferase activity, phosphate group as acceptor"/>
    <property type="evidence" value="ECO:0007669"/>
    <property type="project" value="UniProtKB-UniRule"/>
</dbReference>
<dbReference type="GO" id="GO:0004674">
    <property type="term" value="F:protein serine/threonine kinase activity"/>
    <property type="evidence" value="ECO:0007669"/>
    <property type="project" value="UniProtKB-UniRule"/>
</dbReference>
<dbReference type="HAMAP" id="MF_00921">
    <property type="entry name" value="PDRP"/>
    <property type="match status" value="1"/>
</dbReference>
<dbReference type="InterPro" id="IPR005177">
    <property type="entry name" value="Kinase-pyrophosphorylase"/>
</dbReference>
<dbReference type="InterPro" id="IPR026565">
    <property type="entry name" value="PPDK_reg"/>
</dbReference>
<dbReference type="NCBIfam" id="NF003742">
    <property type="entry name" value="PRK05339.1"/>
    <property type="match status" value="1"/>
</dbReference>
<dbReference type="PANTHER" id="PTHR31756">
    <property type="entry name" value="PYRUVATE, PHOSPHATE DIKINASE REGULATORY PROTEIN 1, CHLOROPLASTIC"/>
    <property type="match status" value="1"/>
</dbReference>
<dbReference type="PANTHER" id="PTHR31756:SF3">
    <property type="entry name" value="PYRUVATE, PHOSPHATE DIKINASE REGULATORY PROTEIN 1, CHLOROPLASTIC"/>
    <property type="match status" value="1"/>
</dbReference>
<dbReference type="Pfam" id="PF03618">
    <property type="entry name" value="Kinase-PPPase"/>
    <property type="match status" value="1"/>
</dbReference>
<name>PDRP2_LISW6</name>
<gene>
    <name type="ordered locus">lwe1885</name>
</gene>
<evidence type="ECO:0000255" key="1">
    <source>
        <dbReference type="HAMAP-Rule" id="MF_00921"/>
    </source>
</evidence>
<reference key="1">
    <citation type="journal article" date="2006" name="J. Bacteriol.">
        <title>Whole-genome sequence of Listeria welshimeri reveals common steps in genome reduction with Listeria innocua as compared to Listeria monocytogenes.</title>
        <authorList>
            <person name="Hain T."/>
            <person name="Steinweg C."/>
            <person name="Kuenne C.T."/>
            <person name="Billion A."/>
            <person name="Ghai R."/>
            <person name="Chatterjee S.S."/>
            <person name="Domann E."/>
            <person name="Kaerst U."/>
            <person name="Goesmann A."/>
            <person name="Bekel T."/>
            <person name="Bartels D."/>
            <person name="Kaiser O."/>
            <person name="Meyer F."/>
            <person name="Puehler A."/>
            <person name="Weisshaar B."/>
            <person name="Wehland J."/>
            <person name="Liang C."/>
            <person name="Dandekar T."/>
            <person name="Lampidis R."/>
            <person name="Kreft J."/>
            <person name="Goebel W."/>
            <person name="Chakraborty T."/>
        </authorList>
    </citation>
    <scope>NUCLEOTIDE SEQUENCE [LARGE SCALE GENOMIC DNA]</scope>
    <source>
        <strain>ATCC 35897 / DSM 20650 / CCUG 15529 / CIP 8149 / NCTC 11857 / SLCC 5334 / V8</strain>
    </source>
</reference>
<proteinExistence type="inferred from homology"/>
<protein>
    <recommendedName>
        <fullName evidence="1">Putative pyruvate, phosphate dikinase regulatory protein 2</fullName>
        <shortName evidence="1">PPDK regulatory protein 2</shortName>
        <ecNumber evidence="1">2.7.11.32</ecNumber>
        <ecNumber evidence="1">2.7.4.27</ecNumber>
    </recommendedName>
</protein>
<organism>
    <name type="scientific">Listeria welshimeri serovar 6b (strain ATCC 35897 / DSM 20650 / CCUG 15529 / CIP 8149 / NCTC 11857 / SLCC 5334 / V8)</name>
    <dbReference type="NCBI Taxonomy" id="386043"/>
    <lineage>
        <taxon>Bacteria</taxon>
        <taxon>Bacillati</taxon>
        <taxon>Bacillota</taxon>
        <taxon>Bacilli</taxon>
        <taxon>Bacillales</taxon>
        <taxon>Listeriaceae</taxon>
        <taxon>Listeria</taxon>
    </lineage>
</organism>
<comment type="function">
    <text evidence="1">Bifunctional serine/threonine kinase and phosphorylase involved in the regulation of the pyruvate, phosphate dikinase (PPDK) by catalyzing its phosphorylation/dephosphorylation.</text>
</comment>
<comment type="catalytic activity">
    <reaction evidence="1">
        <text>N(tele)-phospho-L-histidyl/L-threonyl-[pyruvate, phosphate dikinase] + ADP = N(tele)-phospho-L-histidyl/O-phospho-L-threonyl-[pyruvate, phosphate dikinase] + AMP + H(+)</text>
        <dbReference type="Rhea" id="RHEA:43692"/>
        <dbReference type="Rhea" id="RHEA-COMP:10650"/>
        <dbReference type="Rhea" id="RHEA-COMP:10651"/>
        <dbReference type="ChEBI" id="CHEBI:15378"/>
        <dbReference type="ChEBI" id="CHEBI:30013"/>
        <dbReference type="ChEBI" id="CHEBI:61977"/>
        <dbReference type="ChEBI" id="CHEBI:83586"/>
        <dbReference type="ChEBI" id="CHEBI:456215"/>
        <dbReference type="ChEBI" id="CHEBI:456216"/>
        <dbReference type="EC" id="2.7.11.32"/>
    </reaction>
</comment>
<comment type="catalytic activity">
    <reaction evidence="1">
        <text>N(tele)-phospho-L-histidyl/O-phospho-L-threonyl-[pyruvate, phosphate dikinase] + phosphate + H(+) = N(tele)-phospho-L-histidyl/L-threonyl-[pyruvate, phosphate dikinase] + diphosphate</text>
        <dbReference type="Rhea" id="RHEA:43696"/>
        <dbReference type="Rhea" id="RHEA-COMP:10650"/>
        <dbReference type="Rhea" id="RHEA-COMP:10651"/>
        <dbReference type="ChEBI" id="CHEBI:15378"/>
        <dbReference type="ChEBI" id="CHEBI:30013"/>
        <dbReference type="ChEBI" id="CHEBI:33019"/>
        <dbReference type="ChEBI" id="CHEBI:43474"/>
        <dbReference type="ChEBI" id="CHEBI:61977"/>
        <dbReference type="ChEBI" id="CHEBI:83586"/>
        <dbReference type="EC" id="2.7.4.27"/>
    </reaction>
</comment>
<comment type="similarity">
    <text evidence="1">Belongs to the pyruvate, phosphate/water dikinase regulatory protein family. PDRP subfamily.</text>
</comment>